<proteinExistence type="inferred from homology"/>
<dbReference type="EC" id="5.1.1.1" evidence="1"/>
<dbReference type="EMBL" id="AE008923">
    <property type="protein sequence ID" value="AAM38530.1"/>
    <property type="molecule type" value="Genomic_DNA"/>
</dbReference>
<dbReference type="RefSeq" id="WP_011052446.1">
    <property type="nucleotide sequence ID" value="NC_003919.1"/>
</dbReference>
<dbReference type="SMR" id="Q8PGD0"/>
<dbReference type="GeneID" id="66912719"/>
<dbReference type="KEGG" id="xac:XAC3687"/>
<dbReference type="eggNOG" id="COG0787">
    <property type="taxonomic scope" value="Bacteria"/>
</dbReference>
<dbReference type="HOGENOM" id="CLU_028393_1_0_6"/>
<dbReference type="UniPathway" id="UPA00042">
    <property type="reaction ID" value="UER00497"/>
</dbReference>
<dbReference type="Proteomes" id="UP000000576">
    <property type="component" value="Chromosome"/>
</dbReference>
<dbReference type="GO" id="GO:0005829">
    <property type="term" value="C:cytosol"/>
    <property type="evidence" value="ECO:0007669"/>
    <property type="project" value="TreeGrafter"/>
</dbReference>
<dbReference type="GO" id="GO:0008784">
    <property type="term" value="F:alanine racemase activity"/>
    <property type="evidence" value="ECO:0007669"/>
    <property type="project" value="UniProtKB-UniRule"/>
</dbReference>
<dbReference type="GO" id="GO:0030170">
    <property type="term" value="F:pyridoxal phosphate binding"/>
    <property type="evidence" value="ECO:0007669"/>
    <property type="project" value="UniProtKB-UniRule"/>
</dbReference>
<dbReference type="GO" id="GO:0030632">
    <property type="term" value="P:D-alanine biosynthetic process"/>
    <property type="evidence" value="ECO:0007669"/>
    <property type="project" value="UniProtKB-UniRule"/>
</dbReference>
<dbReference type="CDD" id="cd06827">
    <property type="entry name" value="PLPDE_III_AR_proteobact"/>
    <property type="match status" value="1"/>
</dbReference>
<dbReference type="FunFam" id="2.40.37.10:FF:000002">
    <property type="entry name" value="Alanine racemase"/>
    <property type="match status" value="1"/>
</dbReference>
<dbReference type="FunFam" id="3.20.20.10:FF:000002">
    <property type="entry name" value="Alanine racemase"/>
    <property type="match status" value="1"/>
</dbReference>
<dbReference type="Gene3D" id="3.20.20.10">
    <property type="entry name" value="Alanine racemase"/>
    <property type="match status" value="1"/>
</dbReference>
<dbReference type="Gene3D" id="2.40.37.10">
    <property type="entry name" value="Lyase, Ornithine Decarboxylase, Chain A, domain 1"/>
    <property type="match status" value="1"/>
</dbReference>
<dbReference type="HAMAP" id="MF_01201">
    <property type="entry name" value="Ala_racemase"/>
    <property type="match status" value="1"/>
</dbReference>
<dbReference type="InterPro" id="IPR000821">
    <property type="entry name" value="Ala_racemase"/>
</dbReference>
<dbReference type="InterPro" id="IPR009006">
    <property type="entry name" value="Ala_racemase/Decarboxylase_C"/>
</dbReference>
<dbReference type="InterPro" id="IPR011079">
    <property type="entry name" value="Ala_racemase_C"/>
</dbReference>
<dbReference type="InterPro" id="IPR001608">
    <property type="entry name" value="Ala_racemase_N"/>
</dbReference>
<dbReference type="InterPro" id="IPR020622">
    <property type="entry name" value="Ala_racemase_pyridoxalP-BS"/>
</dbReference>
<dbReference type="InterPro" id="IPR029066">
    <property type="entry name" value="PLP-binding_barrel"/>
</dbReference>
<dbReference type="NCBIfam" id="TIGR00492">
    <property type="entry name" value="alr"/>
    <property type="match status" value="1"/>
</dbReference>
<dbReference type="PANTHER" id="PTHR30511">
    <property type="entry name" value="ALANINE RACEMASE"/>
    <property type="match status" value="1"/>
</dbReference>
<dbReference type="PANTHER" id="PTHR30511:SF0">
    <property type="entry name" value="ALANINE RACEMASE, CATABOLIC-RELATED"/>
    <property type="match status" value="1"/>
</dbReference>
<dbReference type="Pfam" id="PF00842">
    <property type="entry name" value="Ala_racemase_C"/>
    <property type="match status" value="1"/>
</dbReference>
<dbReference type="Pfam" id="PF01168">
    <property type="entry name" value="Ala_racemase_N"/>
    <property type="match status" value="1"/>
</dbReference>
<dbReference type="PRINTS" id="PR00992">
    <property type="entry name" value="ALARACEMASE"/>
</dbReference>
<dbReference type="SMART" id="SM01005">
    <property type="entry name" value="Ala_racemase_C"/>
    <property type="match status" value="1"/>
</dbReference>
<dbReference type="SUPFAM" id="SSF50621">
    <property type="entry name" value="Alanine racemase C-terminal domain-like"/>
    <property type="match status" value="1"/>
</dbReference>
<dbReference type="SUPFAM" id="SSF51419">
    <property type="entry name" value="PLP-binding barrel"/>
    <property type="match status" value="1"/>
</dbReference>
<dbReference type="PROSITE" id="PS00395">
    <property type="entry name" value="ALANINE_RACEMASE"/>
    <property type="match status" value="1"/>
</dbReference>
<sequence length="366" mass="39756">MRPAQASIDLEALRHNYRLAKRLGGSKALAVVKADAYGHGAVRCAQALEPEADGFAVACIEEALELRQAGIRAPILLLEGFFEHDELRLIAEHDLWTVAATPQQVRALAEFQSPRPLRVWLKLDSGMHRLGLSPEDFRAAWLRLRGLPQIASLVLMTHLARADELDCSRTDEQAVAFALTAGGMRAETSLRNSPGLLGWPALRNDWSRPGLMLYGANPFPQDTENTAQLRPVMTLRSRIISVRELPAGEPVGYGARFVAERPTRVGVVAMGYADGYPQFAPNGTPVLVDGQVCPLAGRVSMDMLTVDLTDHPQADIGTPVQLWGDAPQVGALAAQCNVSAYQLLCGLKRVPRVYMGEAAAKEGVTR</sequence>
<reference key="1">
    <citation type="journal article" date="2002" name="Nature">
        <title>Comparison of the genomes of two Xanthomonas pathogens with differing host specificities.</title>
        <authorList>
            <person name="da Silva A.C.R."/>
            <person name="Ferro J.A."/>
            <person name="Reinach F.C."/>
            <person name="Farah C.S."/>
            <person name="Furlan L.R."/>
            <person name="Quaggio R.B."/>
            <person name="Monteiro-Vitorello C.B."/>
            <person name="Van Sluys M.A."/>
            <person name="Almeida N.F. Jr."/>
            <person name="Alves L.M.C."/>
            <person name="do Amaral A.M."/>
            <person name="Bertolini M.C."/>
            <person name="Camargo L.E.A."/>
            <person name="Camarotte G."/>
            <person name="Cannavan F."/>
            <person name="Cardozo J."/>
            <person name="Chambergo F."/>
            <person name="Ciapina L.P."/>
            <person name="Cicarelli R.M.B."/>
            <person name="Coutinho L.L."/>
            <person name="Cursino-Santos J.R."/>
            <person name="El-Dorry H."/>
            <person name="Faria J.B."/>
            <person name="Ferreira A.J.S."/>
            <person name="Ferreira R.C.C."/>
            <person name="Ferro M.I.T."/>
            <person name="Formighieri E.F."/>
            <person name="Franco M.C."/>
            <person name="Greggio C.C."/>
            <person name="Gruber A."/>
            <person name="Katsuyama A.M."/>
            <person name="Kishi L.T."/>
            <person name="Leite R.P."/>
            <person name="Lemos E.G.M."/>
            <person name="Lemos M.V.F."/>
            <person name="Locali E.C."/>
            <person name="Machado M.A."/>
            <person name="Madeira A.M.B.N."/>
            <person name="Martinez-Rossi N.M."/>
            <person name="Martins E.C."/>
            <person name="Meidanis J."/>
            <person name="Menck C.F.M."/>
            <person name="Miyaki C.Y."/>
            <person name="Moon D.H."/>
            <person name="Moreira L.M."/>
            <person name="Novo M.T.M."/>
            <person name="Okura V.K."/>
            <person name="Oliveira M.C."/>
            <person name="Oliveira V.R."/>
            <person name="Pereira H.A."/>
            <person name="Rossi A."/>
            <person name="Sena J.A.D."/>
            <person name="Silva C."/>
            <person name="de Souza R.F."/>
            <person name="Spinola L.A.F."/>
            <person name="Takita M.A."/>
            <person name="Tamura R.E."/>
            <person name="Teixeira E.C."/>
            <person name="Tezza R.I.D."/>
            <person name="Trindade dos Santos M."/>
            <person name="Truffi D."/>
            <person name="Tsai S.M."/>
            <person name="White F.F."/>
            <person name="Setubal J.C."/>
            <person name="Kitajima J.P."/>
        </authorList>
    </citation>
    <scope>NUCLEOTIDE SEQUENCE [LARGE SCALE GENOMIC DNA]</scope>
    <source>
        <strain>306</strain>
    </source>
</reference>
<accession>Q8PGD0</accession>
<comment type="function">
    <text evidence="1">Catalyzes the interconversion of L-alanine and D-alanine. May also act on other amino acids.</text>
</comment>
<comment type="catalytic activity">
    <reaction evidence="1">
        <text>L-alanine = D-alanine</text>
        <dbReference type="Rhea" id="RHEA:20249"/>
        <dbReference type="ChEBI" id="CHEBI:57416"/>
        <dbReference type="ChEBI" id="CHEBI:57972"/>
        <dbReference type="EC" id="5.1.1.1"/>
    </reaction>
</comment>
<comment type="cofactor">
    <cofactor evidence="1">
        <name>pyridoxal 5'-phosphate</name>
        <dbReference type="ChEBI" id="CHEBI:597326"/>
    </cofactor>
</comment>
<comment type="pathway">
    <text evidence="1">Amino-acid biosynthesis; D-alanine biosynthesis; D-alanine from L-alanine: step 1/1.</text>
</comment>
<comment type="similarity">
    <text evidence="1">Belongs to the alanine racemase family.</text>
</comment>
<name>ALR_XANAC</name>
<keyword id="KW-0413">Isomerase</keyword>
<keyword id="KW-0663">Pyridoxal phosphate</keyword>
<protein>
    <recommendedName>
        <fullName evidence="1">Alanine racemase</fullName>
        <ecNumber evidence="1">5.1.1.1</ecNumber>
    </recommendedName>
</protein>
<organism>
    <name type="scientific">Xanthomonas axonopodis pv. citri (strain 306)</name>
    <dbReference type="NCBI Taxonomy" id="190486"/>
    <lineage>
        <taxon>Bacteria</taxon>
        <taxon>Pseudomonadati</taxon>
        <taxon>Pseudomonadota</taxon>
        <taxon>Gammaproteobacteria</taxon>
        <taxon>Lysobacterales</taxon>
        <taxon>Lysobacteraceae</taxon>
        <taxon>Xanthomonas</taxon>
    </lineage>
</organism>
<evidence type="ECO:0000255" key="1">
    <source>
        <dbReference type="HAMAP-Rule" id="MF_01201"/>
    </source>
</evidence>
<feature type="chain" id="PRO_0000114598" description="Alanine racemase">
    <location>
        <begin position="1"/>
        <end position="366"/>
    </location>
</feature>
<feature type="active site" description="Proton acceptor; specific for D-alanine" evidence="1">
    <location>
        <position position="33"/>
    </location>
</feature>
<feature type="active site" description="Proton acceptor; specific for L-alanine" evidence="1">
    <location>
        <position position="253"/>
    </location>
</feature>
<feature type="binding site" evidence="1">
    <location>
        <position position="129"/>
    </location>
    <ligand>
        <name>substrate</name>
    </ligand>
</feature>
<feature type="binding site" evidence="1">
    <location>
        <position position="301"/>
    </location>
    <ligand>
        <name>substrate</name>
    </ligand>
</feature>
<feature type="modified residue" description="N6-(pyridoxal phosphate)lysine" evidence="1">
    <location>
        <position position="33"/>
    </location>
</feature>
<gene>
    <name type="primary">alr</name>
    <name type="ordered locus">XAC3687</name>
</gene>